<sequence>MTLTLAVYGKGGIGKSTTSCNISTALAKRGKKVLQIGCDPKHDSTFTLTGFLIPTIIDTLQEKDFHYEDIWPEDVIYKGYAGVDCVEAGGPPAGAGCGGYVVGETVKLLKELNAFDEYDVILFDVLGDVVCGGFAAPLNYADYCLIVTDNGFDALFAAKRIAASVREKARTHSLRLAGLIGNRTSKRDLIDKYIEAVPMPVLEILPLIEDIRVSRVKGKTLFEMAESDPSLNYVCDYYLNIADQILSQPEGVVPKDAQDRDLFSLLSDFYLNPTQPASQTKELDLMMV</sequence>
<gene>
    <name evidence="1" type="primary">chlL</name>
    <name type="synonym">frxC</name>
    <name type="ordered locus">slr0749</name>
</gene>
<proteinExistence type="inferred from homology"/>
<feature type="chain" id="PRO_0000139574" description="Light-independent protochlorophyllide reductase iron-sulfur ATP-binding protein">
    <location>
        <begin position="1"/>
        <end position="288"/>
    </location>
</feature>
<feature type="binding site" evidence="1">
    <location>
        <begin position="12"/>
        <end position="17"/>
    </location>
    <ligand>
        <name>ATP</name>
        <dbReference type="ChEBI" id="CHEBI:30616"/>
    </ligand>
</feature>
<feature type="binding site" evidence="1">
    <location>
        <position position="16"/>
    </location>
    <ligand>
        <name>Mg(2+)</name>
        <dbReference type="ChEBI" id="CHEBI:18420"/>
    </ligand>
</feature>
<feature type="binding site" evidence="1">
    <location>
        <position position="41"/>
    </location>
    <ligand>
        <name>ATP</name>
        <dbReference type="ChEBI" id="CHEBI:30616"/>
    </ligand>
</feature>
<feature type="binding site" evidence="1">
    <location>
        <position position="97"/>
    </location>
    <ligand>
        <name>[4Fe-4S] cluster</name>
        <dbReference type="ChEBI" id="CHEBI:49883"/>
        <note>ligand shared between dimeric partners</note>
    </ligand>
</feature>
<feature type="binding site" evidence="1">
    <location>
        <position position="131"/>
    </location>
    <ligand>
        <name>[4Fe-4S] cluster</name>
        <dbReference type="ChEBI" id="CHEBI:49883"/>
        <note>ligand shared between dimeric partners</note>
    </ligand>
</feature>
<feature type="binding site" evidence="1">
    <location>
        <begin position="182"/>
        <end position="183"/>
    </location>
    <ligand>
        <name>ATP</name>
        <dbReference type="ChEBI" id="CHEBI:30616"/>
    </ligand>
</feature>
<feature type="sequence conflict" description="In Ref. 2; BAA18745." evidence="2" ref="2">
    <original>K</original>
    <variation>N</variation>
    <location>
        <position position="159"/>
    </location>
</feature>
<protein>
    <recommendedName>
        <fullName evidence="1">Light-independent protochlorophyllide reductase iron-sulfur ATP-binding protein</fullName>
        <shortName evidence="1">DPOR subunit L</shortName>
        <shortName evidence="1">LI-POR subunit L</shortName>
        <ecNumber evidence="1">1.3.7.7</ecNumber>
    </recommendedName>
</protein>
<accession>P28373</accession>
<accession>P74632</accession>
<accession>Q55241</accession>
<keyword id="KW-0004">4Fe-4S</keyword>
<keyword id="KW-0067">ATP-binding</keyword>
<keyword id="KW-0149">Chlorophyll biosynthesis</keyword>
<keyword id="KW-0408">Iron</keyword>
<keyword id="KW-0411">Iron-sulfur</keyword>
<keyword id="KW-0460">Magnesium</keyword>
<keyword id="KW-0479">Metal-binding</keyword>
<keyword id="KW-0547">Nucleotide-binding</keyword>
<keyword id="KW-0560">Oxidoreductase</keyword>
<keyword id="KW-0602">Photosynthesis</keyword>
<keyword id="KW-1185">Reference proteome</keyword>
<evidence type="ECO:0000255" key="1">
    <source>
        <dbReference type="HAMAP-Rule" id="MF_00355"/>
    </source>
</evidence>
<evidence type="ECO:0000305" key="2"/>
<dbReference type="EC" id="1.3.7.7" evidence="1"/>
<dbReference type="EMBL" id="D10474">
    <property type="protein sequence ID" value="BAA01275.1"/>
    <property type="molecule type" value="Genomic_DNA"/>
</dbReference>
<dbReference type="EMBL" id="D10474">
    <property type="protein sequence ID" value="BAA01274.1"/>
    <property type="status" value="ALT_INIT"/>
    <property type="molecule type" value="Genomic_DNA"/>
</dbReference>
<dbReference type="EMBL" id="BA000022">
    <property type="protein sequence ID" value="BAA18745.1"/>
    <property type="status" value="ALT_INIT"/>
    <property type="molecule type" value="Genomic_DNA"/>
</dbReference>
<dbReference type="PIR" id="S76833">
    <property type="entry name" value="S76833"/>
</dbReference>
<dbReference type="SMR" id="P28373"/>
<dbReference type="IntAct" id="P28373">
    <property type="interactions" value="1"/>
</dbReference>
<dbReference type="STRING" id="1148.gene:10500517"/>
<dbReference type="PaxDb" id="1148-1653834"/>
<dbReference type="EnsemblBacteria" id="BAA18745">
    <property type="protein sequence ID" value="BAA18745"/>
    <property type="gene ID" value="BAA18745"/>
</dbReference>
<dbReference type="KEGG" id="syn:slr0749"/>
<dbReference type="eggNOG" id="COG1348">
    <property type="taxonomic scope" value="Bacteria"/>
</dbReference>
<dbReference type="InParanoid" id="P28373"/>
<dbReference type="PhylomeDB" id="P28373"/>
<dbReference type="UniPathway" id="UPA00670"/>
<dbReference type="Proteomes" id="UP000001425">
    <property type="component" value="Chromosome"/>
</dbReference>
<dbReference type="GO" id="GO:0051539">
    <property type="term" value="F:4 iron, 4 sulfur cluster binding"/>
    <property type="evidence" value="ECO:0007669"/>
    <property type="project" value="UniProtKB-UniRule"/>
</dbReference>
<dbReference type="GO" id="GO:0005524">
    <property type="term" value="F:ATP binding"/>
    <property type="evidence" value="ECO:0007669"/>
    <property type="project" value="UniProtKB-UniRule"/>
</dbReference>
<dbReference type="GO" id="GO:0046872">
    <property type="term" value="F:metal ion binding"/>
    <property type="evidence" value="ECO:0007669"/>
    <property type="project" value="UniProtKB-KW"/>
</dbReference>
<dbReference type="GO" id="GO:0016730">
    <property type="term" value="F:oxidoreductase activity, acting on iron-sulfur proteins as donors"/>
    <property type="evidence" value="ECO:0007669"/>
    <property type="project" value="InterPro"/>
</dbReference>
<dbReference type="GO" id="GO:0016636">
    <property type="term" value="F:oxidoreductase activity, acting on the CH-CH group of donors, iron-sulfur protein as acceptor"/>
    <property type="evidence" value="ECO:0007669"/>
    <property type="project" value="UniProtKB-UniRule"/>
</dbReference>
<dbReference type="GO" id="GO:0036068">
    <property type="term" value="P:light-independent chlorophyll biosynthetic process"/>
    <property type="evidence" value="ECO:0007669"/>
    <property type="project" value="UniProtKB-UniRule"/>
</dbReference>
<dbReference type="GO" id="GO:0019685">
    <property type="term" value="P:photosynthesis, dark reaction"/>
    <property type="evidence" value="ECO:0007669"/>
    <property type="project" value="InterPro"/>
</dbReference>
<dbReference type="CDD" id="cd02032">
    <property type="entry name" value="Bchl-like"/>
    <property type="match status" value="1"/>
</dbReference>
<dbReference type="Gene3D" id="3.40.50.300">
    <property type="entry name" value="P-loop containing nucleotide triphosphate hydrolases"/>
    <property type="match status" value="1"/>
</dbReference>
<dbReference type="HAMAP" id="MF_00355">
    <property type="entry name" value="ChlL_BchL"/>
    <property type="match status" value="1"/>
</dbReference>
<dbReference type="InterPro" id="IPR030655">
    <property type="entry name" value="NifH/chlL_CS"/>
</dbReference>
<dbReference type="InterPro" id="IPR000392">
    <property type="entry name" value="NifH/frxC"/>
</dbReference>
<dbReference type="InterPro" id="IPR027417">
    <property type="entry name" value="P-loop_NTPase"/>
</dbReference>
<dbReference type="InterPro" id="IPR005971">
    <property type="entry name" value="Protochlorophyllide_ATP-bd"/>
</dbReference>
<dbReference type="NCBIfam" id="TIGR01281">
    <property type="entry name" value="DPOR_bchL"/>
    <property type="match status" value="1"/>
</dbReference>
<dbReference type="PANTHER" id="PTHR42864">
    <property type="entry name" value="LIGHT-INDEPENDENT PROTOCHLOROPHYLLIDE REDUCTASE IRON-SULFUR ATP-BINDING PROTEIN"/>
    <property type="match status" value="1"/>
</dbReference>
<dbReference type="PANTHER" id="PTHR42864:SF2">
    <property type="entry name" value="LIGHT-INDEPENDENT PROTOCHLOROPHYLLIDE REDUCTASE IRON-SULFUR ATP-BINDING PROTEIN"/>
    <property type="match status" value="1"/>
</dbReference>
<dbReference type="Pfam" id="PF00142">
    <property type="entry name" value="Fer4_NifH"/>
    <property type="match status" value="1"/>
</dbReference>
<dbReference type="PIRSF" id="PIRSF000363">
    <property type="entry name" value="Nitrogenase_iron"/>
    <property type="match status" value="1"/>
</dbReference>
<dbReference type="PRINTS" id="PR00091">
    <property type="entry name" value="NITROGNASEII"/>
</dbReference>
<dbReference type="SUPFAM" id="SSF52540">
    <property type="entry name" value="P-loop containing nucleoside triphosphate hydrolases"/>
    <property type="match status" value="1"/>
</dbReference>
<dbReference type="PROSITE" id="PS00746">
    <property type="entry name" value="NIFH_FRXC_1"/>
    <property type="match status" value="1"/>
</dbReference>
<dbReference type="PROSITE" id="PS00692">
    <property type="entry name" value="NIFH_FRXC_2"/>
    <property type="match status" value="1"/>
</dbReference>
<dbReference type="PROSITE" id="PS51026">
    <property type="entry name" value="NIFH_FRXC_3"/>
    <property type="match status" value="1"/>
</dbReference>
<reference key="1">
    <citation type="journal article" date="1992" name="Biosci. Biotechnol. Biochem.">
        <title>Cloning and nucleotide sequence of a frxC-ORF469 gene cluster of Synechocystis PCC6803: conservation with liverwort chloroplast frxC-ORF465 and nif operon.</title>
        <authorList>
            <person name="Ogura Y."/>
            <person name="Takemura M."/>
            <person name="Oda K."/>
            <person name="Yamato K."/>
            <person name="Ohta E."/>
            <person name="Fukuzawa H."/>
            <person name="Ohyama K."/>
        </authorList>
    </citation>
    <scope>NUCLEOTIDE SEQUENCE [GENOMIC DNA]</scope>
</reference>
<reference key="2">
    <citation type="journal article" date="1996" name="DNA Res.">
        <title>Sequence analysis of the genome of the unicellular cyanobacterium Synechocystis sp. strain PCC6803. II. Sequence determination of the entire genome and assignment of potential protein-coding regions.</title>
        <authorList>
            <person name="Kaneko T."/>
            <person name="Sato S."/>
            <person name="Kotani H."/>
            <person name="Tanaka A."/>
            <person name="Asamizu E."/>
            <person name="Nakamura Y."/>
            <person name="Miyajima N."/>
            <person name="Hirosawa M."/>
            <person name="Sugiura M."/>
            <person name="Sasamoto S."/>
            <person name="Kimura T."/>
            <person name="Hosouchi T."/>
            <person name="Matsuno A."/>
            <person name="Muraki A."/>
            <person name="Nakazaki N."/>
            <person name="Naruo K."/>
            <person name="Okumura S."/>
            <person name="Shimpo S."/>
            <person name="Takeuchi C."/>
            <person name="Wada T."/>
            <person name="Watanabe A."/>
            <person name="Yamada M."/>
            <person name="Yasuda M."/>
            <person name="Tabata S."/>
        </authorList>
    </citation>
    <scope>NUCLEOTIDE SEQUENCE [LARGE SCALE GENOMIC DNA]</scope>
    <source>
        <strain>ATCC 27184 / PCC 6803 / Kazusa</strain>
    </source>
</reference>
<organism>
    <name type="scientific">Synechocystis sp. (strain ATCC 27184 / PCC 6803 / Kazusa)</name>
    <dbReference type="NCBI Taxonomy" id="1111708"/>
    <lineage>
        <taxon>Bacteria</taxon>
        <taxon>Bacillati</taxon>
        <taxon>Cyanobacteriota</taxon>
        <taxon>Cyanophyceae</taxon>
        <taxon>Synechococcales</taxon>
        <taxon>Merismopediaceae</taxon>
        <taxon>Synechocystis</taxon>
    </lineage>
</organism>
<comment type="function">
    <text evidence="1">Component of the dark-operative protochlorophyllide reductase (DPOR) that uses Mg-ATP and reduced ferredoxin to reduce ring D of protochlorophyllide (Pchlide) to form chlorophyllide a (Chlide). This reaction is light-independent. The L component serves as a unique electron donor to the NB-component of the complex, and binds Mg-ATP.</text>
</comment>
<comment type="catalytic activity">
    <reaction evidence="1">
        <text>chlorophyllide a + oxidized 2[4Fe-4S]-[ferredoxin] + 2 ADP + 2 phosphate = protochlorophyllide a + reduced 2[4Fe-4S]-[ferredoxin] + 2 ATP + 2 H2O</text>
        <dbReference type="Rhea" id="RHEA:28202"/>
        <dbReference type="Rhea" id="RHEA-COMP:10002"/>
        <dbReference type="Rhea" id="RHEA-COMP:10004"/>
        <dbReference type="ChEBI" id="CHEBI:15377"/>
        <dbReference type="ChEBI" id="CHEBI:30616"/>
        <dbReference type="ChEBI" id="CHEBI:33722"/>
        <dbReference type="ChEBI" id="CHEBI:33723"/>
        <dbReference type="ChEBI" id="CHEBI:43474"/>
        <dbReference type="ChEBI" id="CHEBI:83348"/>
        <dbReference type="ChEBI" id="CHEBI:83350"/>
        <dbReference type="ChEBI" id="CHEBI:456216"/>
        <dbReference type="EC" id="1.3.7.7"/>
    </reaction>
</comment>
<comment type="cofactor">
    <cofactor evidence="1">
        <name>[4Fe-4S] cluster</name>
        <dbReference type="ChEBI" id="CHEBI:49883"/>
    </cofactor>
    <text evidence="1">Binds 1 [4Fe-4S] cluster per dimer.</text>
</comment>
<comment type="pathway">
    <text evidence="1">Porphyrin-containing compound metabolism; chlorophyll biosynthesis (light-independent).</text>
</comment>
<comment type="subunit">
    <text evidence="1">Homodimer. Protochlorophyllide reductase is composed of three subunits; ChlL, ChlN and ChlB.</text>
</comment>
<comment type="similarity">
    <text evidence="1">Belongs to the NifH/BchL/ChlL family.</text>
</comment>
<comment type="sequence caution" evidence="2">
    <conflict type="erroneous initiation">
        <sequence resource="EMBL-CDS" id="BAA01274"/>
    </conflict>
</comment>
<comment type="sequence caution" evidence="2">
    <conflict type="erroneous initiation">
        <sequence resource="EMBL-CDS" id="BAA18745"/>
    </conflict>
</comment>
<name>CHLL_SYNY3</name>